<organism>
    <name type="scientific">Mus musculus</name>
    <name type="common">Mouse</name>
    <dbReference type="NCBI Taxonomy" id="10090"/>
    <lineage>
        <taxon>Eukaryota</taxon>
        <taxon>Metazoa</taxon>
        <taxon>Chordata</taxon>
        <taxon>Craniata</taxon>
        <taxon>Vertebrata</taxon>
        <taxon>Euteleostomi</taxon>
        <taxon>Mammalia</taxon>
        <taxon>Eutheria</taxon>
        <taxon>Euarchontoglires</taxon>
        <taxon>Glires</taxon>
        <taxon>Rodentia</taxon>
        <taxon>Myomorpha</taxon>
        <taxon>Muroidea</taxon>
        <taxon>Muridae</taxon>
        <taxon>Murinae</taxon>
        <taxon>Mus</taxon>
        <taxon>Mus</taxon>
    </lineage>
</organism>
<comment type="function">
    <text evidence="2">Plays a role in pre-mRNA splicing and 3'-end processing. By recruiting PRPF19 and the PRP19C/Prp19 complex/NTC/Nineteen complex to the RNA polymerase II C-terminal domain (CTD), and thereby pre-mRNA, may couple transcription to splicing. Required for the export of mRNA out of the nucleus, even if the mRNA is encoded by an intron-less gene. Positively regulates pre-mRNA 3'-end processing by recruiting the CFIm complex to cleavage and polyadenylation signals.</text>
</comment>
<comment type="subunit">
    <text evidence="2 5">Interacts with U2AF1L4 (PubMed:16819553). Heterodimer with U2AF1. Binds unphosphorylated SF1. Interacts with SCAF11 and SNW1. Interacts with ZRSR2/U2AF1-RS2. Interacts with RBM17. Interacts with PRPF19; the interaction is direct. Interacts with POLR2A (via the C-terminal domain); Interacts with PRPF19; the interaction is direct. Interacts with POLR2A (via the C-terminal domain); recruits PRPF19 and the Prp19 complex to the pre-mRNA. Interacts with KHDC4 (Isoform 2). Interacts with ZRSR2. Interacts with the SF3B complex composed of SF3B1, SF3B2, SF3B3, SF3B4, SF3B5, SF3B6 and PHF5A (By similarity). Interacts (via N-terminus) with CPSF7 (via C-terminus); this interaction stimulates pre-mRNA 3'-end processing by promoting the recruitment of the CFIm complex to cleavage and polyadenylation signals (By similarity). Interacts with ARGLU1; interaction may be involved in ARGLU1-mediated modulation of alternative splicing (By similarity).</text>
</comment>
<comment type="interaction">
    <interactant intactId="EBI-8321355">
        <id>P26369</id>
    </interactant>
    <interactant intactId="EBI-744603">
        <id>Q15637</id>
        <label>SF1</label>
    </interactant>
    <organismsDiffer>true</organismsDiffer>
    <experiments>3</experiments>
</comment>
<comment type="subcellular location">
    <subcellularLocation>
        <location>Nucleus</location>
    </subcellularLocation>
</comment>
<comment type="PTM">
    <text evidence="1">Lysyl-hydroxylation at Lys-15 and Lys-276 affects the mRNA splicing activity of the protein, leading to regulate some, but not all, alternative splicing events.</text>
</comment>
<comment type="similarity">
    <text evidence="6">Belongs to the splicing factor SR family.</text>
</comment>
<comment type="sequence caution" evidence="6">
    <conflict type="erroneous initiation">
        <sequence resource="EMBL-CDS" id="CAA45875"/>
    </conflict>
</comment>
<gene>
    <name type="primary">U2af2</name>
    <name type="synonym">U2af65</name>
</gene>
<name>U2AF2_MOUSE</name>
<proteinExistence type="evidence at protein level"/>
<reference key="1">
    <citation type="journal article" date="1992" name="Nucleic Acids Res.">
        <title>Cloning and sequencing of the murine homologue of the human splicing factor U2AF65.</title>
        <authorList>
            <person name="Sailer A."/>
            <person name="Macdonald N.J."/>
            <person name="Weissmann C."/>
        </authorList>
    </citation>
    <scope>NUCLEOTIDE SEQUENCE [MRNA]</scope>
    <source>
        <strain>SL/AM</strain>
    </source>
</reference>
<reference key="2">
    <citation type="journal article" date="2005" name="Science">
        <title>The transcriptional landscape of the mammalian genome.</title>
        <authorList>
            <person name="Carninci P."/>
            <person name="Kasukawa T."/>
            <person name="Katayama S."/>
            <person name="Gough J."/>
            <person name="Frith M.C."/>
            <person name="Maeda N."/>
            <person name="Oyama R."/>
            <person name="Ravasi T."/>
            <person name="Lenhard B."/>
            <person name="Wells C."/>
            <person name="Kodzius R."/>
            <person name="Shimokawa K."/>
            <person name="Bajic V.B."/>
            <person name="Brenner S.E."/>
            <person name="Batalov S."/>
            <person name="Forrest A.R."/>
            <person name="Zavolan M."/>
            <person name="Davis M.J."/>
            <person name="Wilming L.G."/>
            <person name="Aidinis V."/>
            <person name="Allen J.E."/>
            <person name="Ambesi-Impiombato A."/>
            <person name="Apweiler R."/>
            <person name="Aturaliya R.N."/>
            <person name="Bailey T.L."/>
            <person name="Bansal M."/>
            <person name="Baxter L."/>
            <person name="Beisel K.W."/>
            <person name="Bersano T."/>
            <person name="Bono H."/>
            <person name="Chalk A.M."/>
            <person name="Chiu K.P."/>
            <person name="Choudhary V."/>
            <person name="Christoffels A."/>
            <person name="Clutterbuck D.R."/>
            <person name="Crowe M.L."/>
            <person name="Dalla E."/>
            <person name="Dalrymple B.P."/>
            <person name="de Bono B."/>
            <person name="Della Gatta G."/>
            <person name="di Bernardo D."/>
            <person name="Down T."/>
            <person name="Engstrom P."/>
            <person name="Fagiolini M."/>
            <person name="Faulkner G."/>
            <person name="Fletcher C.F."/>
            <person name="Fukushima T."/>
            <person name="Furuno M."/>
            <person name="Futaki S."/>
            <person name="Gariboldi M."/>
            <person name="Georgii-Hemming P."/>
            <person name="Gingeras T.R."/>
            <person name="Gojobori T."/>
            <person name="Green R.E."/>
            <person name="Gustincich S."/>
            <person name="Harbers M."/>
            <person name="Hayashi Y."/>
            <person name="Hensch T.K."/>
            <person name="Hirokawa N."/>
            <person name="Hill D."/>
            <person name="Huminiecki L."/>
            <person name="Iacono M."/>
            <person name="Ikeo K."/>
            <person name="Iwama A."/>
            <person name="Ishikawa T."/>
            <person name="Jakt M."/>
            <person name="Kanapin A."/>
            <person name="Katoh M."/>
            <person name="Kawasawa Y."/>
            <person name="Kelso J."/>
            <person name="Kitamura H."/>
            <person name="Kitano H."/>
            <person name="Kollias G."/>
            <person name="Krishnan S.P."/>
            <person name="Kruger A."/>
            <person name="Kummerfeld S.K."/>
            <person name="Kurochkin I.V."/>
            <person name="Lareau L.F."/>
            <person name="Lazarevic D."/>
            <person name="Lipovich L."/>
            <person name="Liu J."/>
            <person name="Liuni S."/>
            <person name="McWilliam S."/>
            <person name="Madan Babu M."/>
            <person name="Madera M."/>
            <person name="Marchionni L."/>
            <person name="Matsuda H."/>
            <person name="Matsuzawa S."/>
            <person name="Miki H."/>
            <person name="Mignone F."/>
            <person name="Miyake S."/>
            <person name="Morris K."/>
            <person name="Mottagui-Tabar S."/>
            <person name="Mulder N."/>
            <person name="Nakano N."/>
            <person name="Nakauchi H."/>
            <person name="Ng P."/>
            <person name="Nilsson R."/>
            <person name="Nishiguchi S."/>
            <person name="Nishikawa S."/>
            <person name="Nori F."/>
            <person name="Ohara O."/>
            <person name="Okazaki Y."/>
            <person name="Orlando V."/>
            <person name="Pang K.C."/>
            <person name="Pavan W.J."/>
            <person name="Pavesi G."/>
            <person name="Pesole G."/>
            <person name="Petrovsky N."/>
            <person name="Piazza S."/>
            <person name="Reed J."/>
            <person name="Reid J.F."/>
            <person name="Ring B.Z."/>
            <person name="Ringwald M."/>
            <person name="Rost B."/>
            <person name="Ruan Y."/>
            <person name="Salzberg S.L."/>
            <person name="Sandelin A."/>
            <person name="Schneider C."/>
            <person name="Schoenbach C."/>
            <person name="Sekiguchi K."/>
            <person name="Semple C.A."/>
            <person name="Seno S."/>
            <person name="Sessa L."/>
            <person name="Sheng Y."/>
            <person name="Shibata Y."/>
            <person name="Shimada H."/>
            <person name="Shimada K."/>
            <person name="Silva D."/>
            <person name="Sinclair B."/>
            <person name="Sperling S."/>
            <person name="Stupka E."/>
            <person name="Sugiura K."/>
            <person name="Sultana R."/>
            <person name="Takenaka Y."/>
            <person name="Taki K."/>
            <person name="Tammoja K."/>
            <person name="Tan S.L."/>
            <person name="Tang S."/>
            <person name="Taylor M.S."/>
            <person name="Tegner J."/>
            <person name="Teichmann S.A."/>
            <person name="Ueda H.R."/>
            <person name="van Nimwegen E."/>
            <person name="Verardo R."/>
            <person name="Wei C.L."/>
            <person name="Yagi K."/>
            <person name="Yamanishi H."/>
            <person name="Zabarovsky E."/>
            <person name="Zhu S."/>
            <person name="Zimmer A."/>
            <person name="Hide W."/>
            <person name="Bult C."/>
            <person name="Grimmond S.M."/>
            <person name="Teasdale R.D."/>
            <person name="Liu E.T."/>
            <person name="Brusic V."/>
            <person name="Quackenbush J."/>
            <person name="Wahlestedt C."/>
            <person name="Mattick J.S."/>
            <person name="Hume D.A."/>
            <person name="Kai C."/>
            <person name="Sasaki D."/>
            <person name="Tomaru Y."/>
            <person name="Fukuda S."/>
            <person name="Kanamori-Katayama M."/>
            <person name="Suzuki M."/>
            <person name="Aoki J."/>
            <person name="Arakawa T."/>
            <person name="Iida J."/>
            <person name="Imamura K."/>
            <person name="Itoh M."/>
            <person name="Kato T."/>
            <person name="Kawaji H."/>
            <person name="Kawagashira N."/>
            <person name="Kawashima T."/>
            <person name="Kojima M."/>
            <person name="Kondo S."/>
            <person name="Konno H."/>
            <person name="Nakano K."/>
            <person name="Ninomiya N."/>
            <person name="Nishio T."/>
            <person name="Okada M."/>
            <person name="Plessy C."/>
            <person name="Shibata K."/>
            <person name="Shiraki T."/>
            <person name="Suzuki S."/>
            <person name="Tagami M."/>
            <person name="Waki K."/>
            <person name="Watahiki A."/>
            <person name="Okamura-Oho Y."/>
            <person name="Suzuki H."/>
            <person name="Kawai J."/>
            <person name="Hayashizaki Y."/>
        </authorList>
    </citation>
    <scope>NUCLEOTIDE SEQUENCE [LARGE SCALE MRNA]</scope>
    <source>
        <strain>C57BL/6J</strain>
    </source>
</reference>
<reference key="3">
    <citation type="journal article" date="2006" name="Nat. Immunol.">
        <title>Auxiliary splice factor U2AF26 and transcription factor Gfi1 cooperate directly in regulating CD45 alternative splicing.</title>
        <authorList>
            <person name="Heyd F."/>
            <person name="ten Dam G."/>
            <person name="Moeroey T."/>
        </authorList>
    </citation>
    <scope>INTERACTION WITH U2AF1L4</scope>
</reference>
<reference key="4">
    <citation type="journal article" date="2010" name="Cell">
        <title>A tissue-specific atlas of mouse protein phosphorylation and expression.</title>
        <authorList>
            <person name="Huttlin E.L."/>
            <person name="Jedrychowski M.P."/>
            <person name="Elias J.E."/>
            <person name="Goswami T."/>
            <person name="Rad R."/>
            <person name="Beausoleil S.A."/>
            <person name="Villen J."/>
            <person name="Haas W."/>
            <person name="Sowa M.E."/>
            <person name="Gygi S.P."/>
        </authorList>
    </citation>
    <scope>PHOSPHORYLATION [LARGE SCALE ANALYSIS] AT SER-79</scope>
    <scope>IDENTIFICATION BY MASS SPECTROMETRY [LARGE SCALE ANALYSIS]</scope>
    <source>
        <tissue>Brain</tissue>
        <tissue>Brown adipose tissue</tissue>
        <tissue>Heart</tissue>
        <tissue>Kidney</tissue>
        <tissue>Liver</tissue>
        <tissue>Lung</tissue>
        <tissue>Pancreas</tissue>
        <tissue>Spleen</tissue>
        <tissue>Testis</tissue>
    </source>
</reference>
<reference key="5">
    <citation type="journal article" date="2013" name="Mol. Cell">
        <title>SIRT5-mediated lysine desuccinylation impacts diverse metabolic pathways.</title>
        <authorList>
            <person name="Park J."/>
            <person name="Chen Y."/>
            <person name="Tishkoff D.X."/>
            <person name="Peng C."/>
            <person name="Tan M."/>
            <person name="Dai L."/>
            <person name="Xie Z."/>
            <person name="Zhang Y."/>
            <person name="Zwaans B.M."/>
            <person name="Skinner M.E."/>
            <person name="Lombard D.B."/>
            <person name="Zhao Y."/>
        </authorList>
    </citation>
    <scope>ACETYLATION [LARGE SCALE ANALYSIS] AT LYS-70</scope>
    <scope>IDENTIFICATION BY MASS SPECTROMETRY [LARGE SCALE ANALYSIS]</scope>
    <source>
        <tissue>Embryonic fibroblast</tissue>
    </source>
</reference>
<feature type="initiator methionine" description="Removed" evidence="2">
    <location>
        <position position="1"/>
    </location>
</feature>
<feature type="chain" id="PRO_0000081989" description="Splicing factor U2AF 65 kDa subunit">
    <location>
        <begin position="2"/>
        <end position="475"/>
    </location>
</feature>
<feature type="domain" description="RRM 1" evidence="3">
    <location>
        <begin position="149"/>
        <end position="231"/>
    </location>
</feature>
<feature type="domain" description="RRM 2" evidence="3">
    <location>
        <begin position="259"/>
        <end position="337"/>
    </location>
</feature>
<feature type="domain" description="RRM 3" evidence="3">
    <location>
        <begin position="385"/>
        <end position="466"/>
    </location>
</feature>
<feature type="region of interest" description="Disordered" evidence="4">
    <location>
        <begin position="1"/>
        <end position="90"/>
    </location>
</feature>
<feature type="region of interest" description="Required for interaction with PRPF19" evidence="2">
    <location>
        <begin position="2"/>
        <end position="93"/>
    </location>
</feature>
<feature type="region of interest" description="Necessary and sufficient to stimulate pre-mRNAs 3'-end cleavage in a CFIm complex-dependent manner" evidence="2">
    <location>
        <begin position="17"/>
        <end position="47"/>
    </location>
</feature>
<feature type="compositionally biased region" description="Basic and acidic residues" evidence="4">
    <location>
        <begin position="7"/>
        <end position="22"/>
    </location>
</feature>
<feature type="compositionally biased region" description="Basic residues" evidence="4">
    <location>
        <begin position="23"/>
        <end position="46"/>
    </location>
</feature>
<feature type="compositionally biased region" description="Basic and acidic residues" evidence="4">
    <location>
        <begin position="47"/>
        <end position="56"/>
    </location>
</feature>
<feature type="compositionally biased region" description="Basic residues" evidence="4">
    <location>
        <begin position="79"/>
        <end position="89"/>
    </location>
</feature>
<feature type="modified residue" description="N-acetylserine" evidence="2">
    <location>
        <position position="2"/>
    </location>
</feature>
<feature type="modified residue" description="Phosphoserine" evidence="2">
    <location>
        <position position="2"/>
    </location>
</feature>
<feature type="modified residue" description="5-hydroxylysine; by JMJD6; alternate" evidence="1">
    <location>
        <position position="15"/>
    </location>
</feature>
<feature type="modified residue" description="N6-acetyllysine; alternate" evidence="8">
    <location>
        <position position="70"/>
    </location>
</feature>
<feature type="modified residue" description="Phosphoserine" evidence="7">
    <location>
        <position position="79"/>
    </location>
</feature>
<feature type="modified residue" description="5-hydroxylysine; by JMJD6" evidence="1">
    <location>
        <position position="276"/>
    </location>
</feature>
<feature type="modified residue" description="Phosphoserine" evidence="2">
    <location>
        <position position="294"/>
    </location>
</feature>
<feature type="cross-link" description="Glycyl lysine isopeptide (Lys-Gly) (interchain with G-Cter in SUMO2); alternate" evidence="2">
    <location>
        <position position="15"/>
    </location>
</feature>
<feature type="cross-link" description="Glycyl lysine isopeptide (Lys-Gly) (interchain with G-Cter in SUMO2); alternate" evidence="2">
    <location>
        <position position="70"/>
    </location>
</feature>
<feature type="strand" evidence="10">
    <location>
        <begin position="376"/>
        <end position="383"/>
    </location>
</feature>
<feature type="helix" evidence="10">
    <location>
        <begin position="386"/>
        <end position="388"/>
    </location>
</feature>
<feature type="strand" evidence="10">
    <location>
        <begin position="389"/>
        <end position="391"/>
    </location>
</feature>
<feature type="helix" evidence="10">
    <location>
        <begin position="392"/>
        <end position="407"/>
    </location>
</feature>
<feature type="strand" evidence="10">
    <location>
        <begin position="412"/>
        <end position="416"/>
    </location>
</feature>
<feature type="turn" evidence="10">
    <location>
        <begin position="427"/>
        <end position="430"/>
    </location>
</feature>
<feature type="strand" evidence="10">
    <location>
        <begin position="431"/>
        <end position="438"/>
    </location>
</feature>
<feature type="helix" evidence="10">
    <location>
        <begin position="439"/>
        <end position="449"/>
    </location>
</feature>
<feature type="strand" evidence="9">
    <location>
        <begin position="454"/>
        <end position="457"/>
    </location>
</feature>
<feature type="strand" evidence="10">
    <location>
        <begin position="460"/>
        <end position="464"/>
    </location>
</feature>
<feature type="helix" evidence="10">
    <location>
        <begin position="466"/>
        <end position="470"/>
    </location>
</feature>
<accession>P26369</accession>
<keyword id="KW-0002">3D-structure</keyword>
<keyword id="KW-0007">Acetylation</keyword>
<keyword id="KW-0379">Hydroxylation</keyword>
<keyword id="KW-1017">Isopeptide bond</keyword>
<keyword id="KW-0507">mRNA processing</keyword>
<keyword id="KW-0508">mRNA splicing</keyword>
<keyword id="KW-0539">Nucleus</keyword>
<keyword id="KW-0597">Phosphoprotein</keyword>
<keyword id="KW-1185">Reference proteome</keyword>
<keyword id="KW-0677">Repeat</keyword>
<keyword id="KW-0678">Repressor</keyword>
<keyword id="KW-0694">RNA-binding</keyword>
<keyword id="KW-0832">Ubl conjugation</keyword>
<protein>
    <recommendedName>
        <fullName>Splicing factor U2AF 65 kDa subunit</fullName>
    </recommendedName>
    <alternativeName>
        <fullName>U2 auxiliary factor 65 kDa subunit</fullName>
    </alternativeName>
    <alternativeName>
        <fullName>U2 snRNP auxiliary factor large subunit</fullName>
    </alternativeName>
</protein>
<sequence length="475" mass="53517">MSDFDEFERQLNENKQERDKENRHRKRSHSRSRSRDRKRRSRSRDRRNRDQRSASRDRRRRSKPLTRGAKEEHGGLIRSPRHEKKKKVRKYWDVPPPGFEHITPMQYKAMQAAGQIPATALLPTMTPDGLAVTPTPVPVVGSQMTRQARRLYVGNIPFGITEEAMMDFFNAQMRLGGLTQAPGNPVLAVQINQDKNFAFLEFRSVDETTQAMAFDGIIFQGQSLKIRRPHDYQPLPGMSENPSVYVPGVVSTVVPDSAHKLFIGGLPNYLNDDQVKELLTSFGPLKAFNLVKDSATGLSKGYAFCEYVDINVTDQAIAGLNGMQLGDKKLLVQRASVGAKNATLVSLPSTINQTPVTLQVPGLMSSQVQMGGHPTEVLCLMNMVLPEELLDDEEYEEIVEDVRDECSKYGLVKSIEIPRPVDGVEVPGCGKIFVEFTSVFDCQKAMQGLTGRKFANRVVVTKYCDPDSYHRRDFW</sequence>
<dbReference type="EMBL" id="X64587">
    <property type="protein sequence ID" value="CAA45874.1"/>
    <property type="molecule type" value="mRNA"/>
</dbReference>
<dbReference type="EMBL" id="X64587">
    <property type="protein sequence ID" value="CAA45875.1"/>
    <property type="status" value="ALT_INIT"/>
    <property type="molecule type" value="mRNA"/>
</dbReference>
<dbReference type="EMBL" id="AK078496">
    <property type="protein sequence ID" value="BAC37309.1"/>
    <property type="molecule type" value="mRNA"/>
</dbReference>
<dbReference type="CCDS" id="CCDS57476.1"/>
<dbReference type="PIR" id="S22646">
    <property type="entry name" value="S22646"/>
</dbReference>
<dbReference type="RefSeq" id="NP_001192160.1">
    <property type="nucleotide sequence ID" value="NM_001205231.2"/>
</dbReference>
<dbReference type="PDB" id="2M52">
    <property type="method" value="NMR"/>
    <property type="chains" value="A=371-475"/>
</dbReference>
<dbReference type="PDB" id="3V4M">
    <property type="method" value="X-ray"/>
    <property type="resolution" value="1.80 A"/>
    <property type="chains" value="A/B=372-475"/>
</dbReference>
<dbReference type="PDB" id="4RU2">
    <property type="method" value="X-ray"/>
    <property type="resolution" value="2.20 A"/>
    <property type="chains" value="B/D/F/H/J/L/N/P/R=85-112"/>
</dbReference>
<dbReference type="PDB" id="4Z2X">
    <property type="method" value="X-ray"/>
    <property type="resolution" value="2.15 A"/>
    <property type="chains" value="A/B=371-475"/>
</dbReference>
<dbReference type="PDB" id="5CXT">
    <property type="method" value="X-ray"/>
    <property type="resolution" value="2.20 A"/>
    <property type="chains" value="B/D/F/H/J/L/N/P/R=85-112"/>
</dbReference>
<dbReference type="PDBsum" id="2M52"/>
<dbReference type="PDBsum" id="3V4M"/>
<dbReference type="PDBsum" id="4RU2"/>
<dbReference type="PDBsum" id="4Z2X"/>
<dbReference type="PDBsum" id="5CXT"/>
<dbReference type="BMRB" id="P26369"/>
<dbReference type="SMR" id="P26369"/>
<dbReference type="BioGRID" id="204400">
    <property type="interactions" value="77"/>
</dbReference>
<dbReference type="ComplexPortal" id="CPX-5861">
    <property type="entry name" value="SF1-U2AF65 splicing factor complex"/>
</dbReference>
<dbReference type="FunCoup" id="P26369">
    <property type="interactions" value="3982"/>
</dbReference>
<dbReference type="IntAct" id="P26369">
    <property type="interactions" value="2"/>
</dbReference>
<dbReference type="STRING" id="10090.ENSMUSP00000147013"/>
<dbReference type="GlyGen" id="P26369">
    <property type="glycosylation" value="3 sites, 1 O-linked glycan (1 site)"/>
</dbReference>
<dbReference type="iPTMnet" id="P26369"/>
<dbReference type="PhosphoSitePlus" id="P26369"/>
<dbReference type="SwissPalm" id="P26369"/>
<dbReference type="jPOST" id="P26369"/>
<dbReference type="PaxDb" id="10090-ENSMUSP00000005041"/>
<dbReference type="PeptideAtlas" id="P26369"/>
<dbReference type="ProteomicsDB" id="298249"/>
<dbReference type="Pumba" id="P26369"/>
<dbReference type="Antibodypedia" id="4399">
    <property type="antibodies" value="275 antibodies from 27 providers"/>
</dbReference>
<dbReference type="DNASU" id="22185"/>
<dbReference type="Ensembl" id="ENSMUST00000209099.2">
    <property type="protein sequence ID" value="ENSMUSP00000147013.2"/>
    <property type="gene ID" value="ENSMUSG00000030435.18"/>
</dbReference>
<dbReference type="GeneID" id="22185"/>
<dbReference type="KEGG" id="mmu:22185"/>
<dbReference type="UCSC" id="uc009ezu.3">
    <property type="organism name" value="mouse"/>
</dbReference>
<dbReference type="AGR" id="MGI:98886"/>
<dbReference type="CTD" id="11338"/>
<dbReference type="MGI" id="MGI:98886">
    <property type="gene designation" value="U2af2"/>
</dbReference>
<dbReference type="VEuPathDB" id="HostDB:ENSMUSG00000030435"/>
<dbReference type="eggNOG" id="KOG0120">
    <property type="taxonomic scope" value="Eukaryota"/>
</dbReference>
<dbReference type="GeneTree" id="ENSGT00940000155556"/>
<dbReference type="InParanoid" id="P26369"/>
<dbReference type="OMA" id="MTQWDIK"/>
<dbReference type="OrthoDB" id="10266058at2759"/>
<dbReference type="PhylomeDB" id="P26369"/>
<dbReference type="TreeFam" id="TF314111"/>
<dbReference type="Reactome" id="R-MMU-159236">
    <property type="pathway name" value="Transport of Mature mRNA derived from an Intron-Containing Transcript"/>
</dbReference>
<dbReference type="Reactome" id="R-MMU-72163">
    <property type="pathway name" value="mRNA Splicing - Major Pathway"/>
</dbReference>
<dbReference type="Reactome" id="R-MMU-72187">
    <property type="pathway name" value="mRNA 3'-end processing"/>
</dbReference>
<dbReference type="Reactome" id="R-MMU-73856">
    <property type="pathway name" value="RNA Polymerase II Transcription Termination"/>
</dbReference>
<dbReference type="Reactome" id="R-MMU-9629569">
    <property type="pathway name" value="Protein hydroxylation"/>
</dbReference>
<dbReference type="BioGRID-ORCS" id="22185">
    <property type="hits" value="28 hits in 79 CRISPR screens"/>
</dbReference>
<dbReference type="ChiTaRS" id="U2af2">
    <property type="organism name" value="mouse"/>
</dbReference>
<dbReference type="EvolutionaryTrace" id="P26369"/>
<dbReference type="PRO" id="PR:P26369"/>
<dbReference type="Proteomes" id="UP000000589">
    <property type="component" value="Chromosome 7"/>
</dbReference>
<dbReference type="RNAct" id="P26369">
    <property type="molecule type" value="protein"/>
</dbReference>
<dbReference type="Bgee" id="ENSMUSG00000030435">
    <property type="expression patterns" value="Expressed in ventricular zone and 265 other cell types or tissues"/>
</dbReference>
<dbReference type="ExpressionAtlas" id="P26369">
    <property type="expression patterns" value="baseline and differential"/>
</dbReference>
<dbReference type="GO" id="GO:0016607">
    <property type="term" value="C:nuclear speck"/>
    <property type="evidence" value="ECO:0000266"/>
    <property type="project" value="MGI"/>
</dbReference>
<dbReference type="GO" id="GO:0005634">
    <property type="term" value="C:nucleus"/>
    <property type="evidence" value="ECO:0000303"/>
    <property type="project" value="ComplexPortal"/>
</dbReference>
<dbReference type="GO" id="GO:0000974">
    <property type="term" value="C:Prp19 complex"/>
    <property type="evidence" value="ECO:0007669"/>
    <property type="project" value="Ensembl"/>
</dbReference>
<dbReference type="GO" id="GO:0005681">
    <property type="term" value="C:spliceosomal complex"/>
    <property type="evidence" value="ECO:0000266"/>
    <property type="project" value="ComplexPortal"/>
</dbReference>
<dbReference type="GO" id="GO:0071004">
    <property type="term" value="C:U2-type prespliceosome"/>
    <property type="evidence" value="ECO:0007669"/>
    <property type="project" value="Ensembl"/>
</dbReference>
<dbReference type="GO" id="GO:0089701">
    <property type="term" value="C:U2AF complex"/>
    <property type="evidence" value="ECO:0000266"/>
    <property type="project" value="ComplexPortal"/>
</dbReference>
<dbReference type="GO" id="GO:0070742">
    <property type="term" value="F:C2H2 zinc finger domain binding"/>
    <property type="evidence" value="ECO:0000353"/>
    <property type="project" value="UniProtKB"/>
</dbReference>
<dbReference type="GO" id="GO:0019899">
    <property type="term" value="F:enzyme binding"/>
    <property type="evidence" value="ECO:0007669"/>
    <property type="project" value="Ensembl"/>
</dbReference>
<dbReference type="GO" id="GO:0030628">
    <property type="term" value="F:pre-mRNA 3'-splice site binding"/>
    <property type="evidence" value="ECO:0007669"/>
    <property type="project" value="Ensembl"/>
</dbReference>
<dbReference type="GO" id="GO:0000398">
    <property type="term" value="P:mRNA splicing, via spliceosome"/>
    <property type="evidence" value="ECO:0000303"/>
    <property type="project" value="ComplexPortal"/>
</dbReference>
<dbReference type="GO" id="GO:0048025">
    <property type="term" value="P:negative regulation of mRNA splicing, via spliceosome"/>
    <property type="evidence" value="ECO:0000250"/>
    <property type="project" value="UniProtKB"/>
</dbReference>
<dbReference type="GO" id="GO:0031397">
    <property type="term" value="P:negative regulation of protein ubiquitination"/>
    <property type="evidence" value="ECO:0007669"/>
    <property type="project" value="Ensembl"/>
</dbReference>
<dbReference type="GO" id="GO:0033120">
    <property type="term" value="P:positive regulation of RNA splicing"/>
    <property type="evidence" value="ECO:0000250"/>
    <property type="project" value="UniProtKB"/>
</dbReference>
<dbReference type="GO" id="GO:0008380">
    <property type="term" value="P:RNA splicing"/>
    <property type="evidence" value="ECO:0000314"/>
    <property type="project" value="UniProtKB"/>
</dbReference>
<dbReference type="CDD" id="cd12230">
    <property type="entry name" value="RRM1_U2AF65"/>
    <property type="match status" value="1"/>
</dbReference>
<dbReference type="CDD" id="cd12231">
    <property type="entry name" value="RRM2_U2AF65"/>
    <property type="match status" value="1"/>
</dbReference>
<dbReference type="CDD" id="cd12232">
    <property type="entry name" value="RRM3_U2AF65"/>
    <property type="match status" value="1"/>
</dbReference>
<dbReference type="FunFam" id="3.30.70.330:FF:000074">
    <property type="entry name" value="U2 snRNP auxiliary factor large subunit"/>
    <property type="match status" value="1"/>
</dbReference>
<dbReference type="FunFam" id="3.30.70.330:FF:000097">
    <property type="entry name" value="U2 snRNP auxiliary factor large subunit"/>
    <property type="match status" value="1"/>
</dbReference>
<dbReference type="Gene3D" id="3.30.70.330">
    <property type="match status" value="3"/>
</dbReference>
<dbReference type="InterPro" id="IPR012677">
    <property type="entry name" value="Nucleotide-bd_a/b_plait_sf"/>
</dbReference>
<dbReference type="InterPro" id="IPR035979">
    <property type="entry name" value="RBD_domain_sf"/>
</dbReference>
<dbReference type="InterPro" id="IPR000504">
    <property type="entry name" value="RRM_dom"/>
</dbReference>
<dbReference type="InterPro" id="IPR006529">
    <property type="entry name" value="U2AF_lg"/>
</dbReference>
<dbReference type="NCBIfam" id="TIGR01642">
    <property type="entry name" value="U2AF_lg"/>
    <property type="match status" value="1"/>
</dbReference>
<dbReference type="PANTHER" id="PTHR23139">
    <property type="entry name" value="RNA-BINDING PROTEIN"/>
    <property type="match status" value="1"/>
</dbReference>
<dbReference type="Pfam" id="PF00076">
    <property type="entry name" value="RRM_1"/>
    <property type="match status" value="3"/>
</dbReference>
<dbReference type="SMART" id="SM00360">
    <property type="entry name" value="RRM"/>
    <property type="match status" value="3"/>
</dbReference>
<dbReference type="SUPFAM" id="SSF54928">
    <property type="entry name" value="RNA-binding domain, RBD"/>
    <property type="match status" value="3"/>
</dbReference>
<dbReference type="PROSITE" id="PS50102">
    <property type="entry name" value="RRM"/>
    <property type="match status" value="3"/>
</dbReference>
<evidence type="ECO:0000250" key="1"/>
<evidence type="ECO:0000250" key="2">
    <source>
        <dbReference type="UniProtKB" id="P26368"/>
    </source>
</evidence>
<evidence type="ECO:0000255" key="3">
    <source>
        <dbReference type="PROSITE-ProRule" id="PRU00176"/>
    </source>
</evidence>
<evidence type="ECO:0000256" key="4">
    <source>
        <dbReference type="SAM" id="MobiDB-lite"/>
    </source>
</evidence>
<evidence type="ECO:0000269" key="5">
    <source>
    </source>
</evidence>
<evidence type="ECO:0000305" key="6"/>
<evidence type="ECO:0007744" key="7">
    <source>
    </source>
</evidence>
<evidence type="ECO:0007744" key="8">
    <source>
    </source>
</evidence>
<evidence type="ECO:0007829" key="9">
    <source>
        <dbReference type="PDB" id="2M52"/>
    </source>
</evidence>
<evidence type="ECO:0007829" key="10">
    <source>
        <dbReference type="PDB" id="3V4M"/>
    </source>
</evidence>